<proteinExistence type="inferred from homology"/>
<organism>
    <name type="scientific">Agrobacterium fabrum (strain C58 / ATCC 33970)</name>
    <name type="common">Agrobacterium tumefaciens (strain C58)</name>
    <dbReference type="NCBI Taxonomy" id="176299"/>
    <lineage>
        <taxon>Bacteria</taxon>
        <taxon>Pseudomonadati</taxon>
        <taxon>Pseudomonadota</taxon>
        <taxon>Alphaproteobacteria</taxon>
        <taxon>Hyphomicrobiales</taxon>
        <taxon>Rhizobiaceae</taxon>
        <taxon>Rhizobium/Agrobacterium group</taxon>
        <taxon>Agrobacterium</taxon>
        <taxon>Agrobacterium tumefaciens complex</taxon>
    </lineage>
</organism>
<feature type="chain" id="PRO_0000177622" description="Peptide chain release factor 1">
    <location>
        <begin position="1"/>
        <end position="360"/>
    </location>
</feature>
<feature type="region of interest" description="Disordered" evidence="2">
    <location>
        <begin position="284"/>
        <end position="304"/>
    </location>
</feature>
<feature type="modified residue" description="N5-methylglutamine" evidence="1">
    <location>
        <position position="235"/>
    </location>
</feature>
<sequence length="360" mass="40044">MAKLPVEKMRELERRFGEIEARMSAGPAADVYVKLASEYSELEPVVKKIRDYEKAISEAADLEALLADKTTDKDMRDLAEMELPEVETRIRELEKDMQVLLLPKDAADEKSAILEIRAGTGGSEAALFAGDLFRMYERFAATKGWKVEVLSASEGEAGGYKEIIATITGRGVFSKLKFESGVHRVQRVPETEASGRIHTSAATVAVLPEAEDIDVEIRPEDIRIDTMRASGAGGQHVNTTDSAVRITHLPTGLIVTSSEKSQHQNRAKAMQVLRSRLYDIERQKVDSERSADRKSQVGSGDRSERIRTYNFPQGRVTDHRINLTLYKLDRVIEGEIDELVDALIADYQAGQLAQLGEQQL</sequence>
<name>RF1_AGRFC</name>
<keyword id="KW-0963">Cytoplasm</keyword>
<keyword id="KW-0488">Methylation</keyword>
<keyword id="KW-0648">Protein biosynthesis</keyword>
<keyword id="KW-1185">Reference proteome</keyword>
<comment type="function">
    <text evidence="1">Peptide chain release factor 1 directs the termination of translation in response to the peptide chain termination codons UAG and UAA.</text>
</comment>
<comment type="subcellular location">
    <subcellularLocation>
        <location evidence="1">Cytoplasm</location>
    </subcellularLocation>
</comment>
<comment type="PTM">
    <text evidence="1">Methylated by PrmC. Methylation increases the termination efficiency of RF1.</text>
</comment>
<comment type="similarity">
    <text evidence="1">Belongs to the prokaryotic/mitochondrial release factor family.</text>
</comment>
<protein>
    <recommendedName>
        <fullName evidence="1">Peptide chain release factor 1</fullName>
        <shortName evidence="1">RF-1</shortName>
    </recommendedName>
</protein>
<reference key="1">
    <citation type="journal article" date="2001" name="Science">
        <title>The genome of the natural genetic engineer Agrobacterium tumefaciens C58.</title>
        <authorList>
            <person name="Wood D.W."/>
            <person name="Setubal J.C."/>
            <person name="Kaul R."/>
            <person name="Monks D.E."/>
            <person name="Kitajima J.P."/>
            <person name="Okura V.K."/>
            <person name="Zhou Y."/>
            <person name="Chen L."/>
            <person name="Wood G.E."/>
            <person name="Almeida N.F. Jr."/>
            <person name="Woo L."/>
            <person name="Chen Y."/>
            <person name="Paulsen I.T."/>
            <person name="Eisen J.A."/>
            <person name="Karp P.D."/>
            <person name="Bovee D. Sr."/>
            <person name="Chapman P."/>
            <person name="Clendenning J."/>
            <person name="Deatherage G."/>
            <person name="Gillet W."/>
            <person name="Grant C."/>
            <person name="Kutyavin T."/>
            <person name="Levy R."/>
            <person name="Li M.-J."/>
            <person name="McClelland E."/>
            <person name="Palmieri A."/>
            <person name="Raymond C."/>
            <person name="Rouse G."/>
            <person name="Saenphimmachak C."/>
            <person name="Wu Z."/>
            <person name="Romero P."/>
            <person name="Gordon D."/>
            <person name="Zhang S."/>
            <person name="Yoo H."/>
            <person name="Tao Y."/>
            <person name="Biddle P."/>
            <person name="Jung M."/>
            <person name="Krespan W."/>
            <person name="Perry M."/>
            <person name="Gordon-Kamm B."/>
            <person name="Liao L."/>
            <person name="Kim S."/>
            <person name="Hendrick C."/>
            <person name="Zhao Z.-Y."/>
            <person name="Dolan M."/>
            <person name="Chumley F."/>
            <person name="Tingey S.V."/>
            <person name="Tomb J.-F."/>
            <person name="Gordon M.P."/>
            <person name="Olson M.V."/>
            <person name="Nester E.W."/>
        </authorList>
    </citation>
    <scope>NUCLEOTIDE SEQUENCE [LARGE SCALE GENOMIC DNA]</scope>
    <source>
        <strain>C58 / ATCC 33970</strain>
    </source>
</reference>
<reference key="2">
    <citation type="journal article" date="2001" name="Science">
        <title>Genome sequence of the plant pathogen and biotechnology agent Agrobacterium tumefaciens C58.</title>
        <authorList>
            <person name="Goodner B."/>
            <person name="Hinkle G."/>
            <person name="Gattung S."/>
            <person name="Miller N."/>
            <person name="Blanchard M."/>
            <person name="Qurollo B."/>
            <person name="Goldman B.S."/>
            <person name="Cao Y."/>
            <person name="Askenazi M."/>
            <person name="Halling C."/>
            <person name="Mullin L."/>
            <person name="Houmiel K."/>
            <person name="Gordon J."/>
            <person name="Vaudin M."/>
            <person name="Iartchouk O."/>
            <person name="Epp A."/>
            <person name="Liu F."/>
            <person name="Wollam C."/>
            <person name="Allinger M."/>
            <person name="Doughty D."/>
            <person name="Scott C."/>
            <person name="Lappas C."/>
            <person name="Markelz B."/>
            <person name="Flanagan C."/>
            <person name="Crowell C."/>
            <person name="Gurson J."/>
            <person name="Lomo C."/>
            <person name="Sear C."/>
            <person name="Strub G."/>
            <person name="Cielo C."/>
            <person name="Slater S."/>
        </authorList>
    </citation>
    <scope>NUCLEOTIDE SEQUENCE [LARGE SCALE GENOMIC DNA]</scope>
    <source>
        <strain>C58 / ATCC 33970</strain>
    </source>
</reference>
<dbReference type="EMBL" id="AE007870">
    <property type="protein sequence ID" value="AAK89260.1"/>
    <property type="molecule type" value="Genomic_DNA"/>
</dbReference>
<dbReference type="PIR" id="AH3069">
    <property type="entry name" value="AH3069"/>
</dbReference>
<dbReference type="PIR" id="B98217">
    <property type="entry name" value="B98217"/>
</dbReference>
<dbReference type="RefSeq" id="NP_356475.1">
    <property type="nucleotide sequence ID" value="NC_003063.2"/>
</dbReference>
<dbReference type="RefSeq" id="WP_010973615.1">
    <property type="nucleotide sequence ID" value="NC_003063.2"/>
</dbReference>
<dbReference type="SMR" id="Q8U8B8"/>
<dbReference type="STRING" id="176299.Atu4174"/>
<dbReference type="EnsemblBacteria" id="AAK89260">
    <property type="protein sequence ID" value="AAK89260"/>
    <property type="gene ID" value="Atu4174"/>
</dbReference>
<dbReference type="GeneID" id="1136048"/>
<dbReference type="KEGG" id="atu:Atu4174"/>
<dbReference type="PATRIC" id="fig|176299.10.peg.3988"/>
<dbReference type="eggNOG" id="COG0216">
    <property type="taxonomic scope" value="Bacteria"/>
</dbReference>
<dbReference type="HOGENOM" id="CLU_036856_0_1_5"/>
<dbReference type="OrthoDB" id="9806673at2"/>
<dbReference type="PhylomeDB" id="Q8U8B8"/>
<dbReference type="BioCyc" id="AGRO:ATU4174-MONOMER"/>
<dbReference type="Proteomes" id="UP000000813">
    <property type="component" value="Chromosome linear"/>
</dbReference>
<dbReference type="GO" id="GO:0005737">
    <property type="term" value="C:cytoplasm"/>
    <property type="evidence" value="ECO:0007669"/>
    <property type="project" value="UniProtKB-SubCell"/>
</dbReference>
<dbReference type="GO" id="GO:0016149">
    <property type="term" value="F:translation release factor activity, codon specific"/>
    <property type="evidence" value="ECO:0007669"/>
    <property type="project" value="UniProtKB-UniRule"/>
</dbReference>
<dbReference type="FunFam" id="3.30.160.20:FF:000004">
    <property type="entry name" value="Peptide chain release factor 1"/>
    <property type="match status" value="1"/>
</dbReference>
<dbReference type="FunFam" id="3.30.70.1660:FF:000002">
    <property type="entry name" value="Peptide chain release factor 1"/>
    <property type="match status" value="1"/>
</dbReference>
<dbReference type="FunFam" id="3.30.70.1660:FF:000004">
    <property type="entry name" value="Peptide chain release factor 1"/>
    <property type="match status" value="1"/>
</dbReference>
<dbReference type="Gene3D" id="3.30.160.20">
    <property type="match status" value="1"/>
</dbReference>
<dbReference type="Gene3D" id="3.30.70.1660">
    <property type="match status" value="2"/>
</dbReference>
<dbReference type="Gene3D" id="6.10.140.1950">
    <property type="match status" value="1"/>
</dbReference>
<dbReference type="HAMAP" id="MF_00093">
    <property type="entry name" value="Rel_fac_1"/>
    <property type="match status" value="1"/>
</dbReference>
<dbReference type="InterPro" id="IPR005139">
    <property type="entry name" value="PCRF"/>
</dbReference>
<dbReference type="InterPro" id="IPR000352">
    <property type="entry name" value="Pep_chain_release_fac_I"/>
</dbReference>
<dbReference type="InterPro" id="IPR045853">
    <property type="entry name" value="Pep_chain_release_fac_I_sf"/>
</dbReference>
<dbReference type="InterPro" id="IPR050057">
    <property type="entry name" value="Prokaryotic/Mito_RF"/>
</dbReference>
<dbReference type="InterPro" id="IPR004373">
    <property type="entry name" value="RF-1"/>
</dbReference>
<dbReference type="NCBIfam" id="TIGR00019">
    <property type="entry name" value="prfA"/>
    <property type="match status" value="1"/>
</dbReference>
<dbReference type="NCBIfam" id="NF001859">
    <property type="entry name" value="PRK00591.1"/>
    <property type="match status" value="1"/>
</dbReference>
<dbReference type="PANTHER" id="PTHR43804">
    <property type="entry name" value="LD18447P"/>
    <property type="match status" value="1"/>
</dbReference>
<dbReference type="PANTHER" id="PTHR43804:SF7">
    <property type="entry name" value="LD18447P"/>
    <property type="match status" value="1"/>
</dbReference>
<dbReference type="Pfam" id="PF03462">
    <property type="entry name" value="PCRF"/>
    <property type="match status" value="1"/>
</dbReference>
<dbReference type="Pfam" id="PF00472">
    <property type="entry name" value="RF-1"/>
    <property type="match status" value="1"/>
</dbReference>
<dbReference type="SMART" id="SM00937">
    <property type="entry name" value="PCRF"/>
    <property type="match status" value="1"/>
</dbReference>
<dbReference type="SUPFAM" id="SSF75620">
    <property type="entry name" value="Release factor"/>
    <property type="match status" value="1"/>
</dbReference>
<dbReference type="PROSITE" id="PS00745">
    <property type="entry name" value="RF_PROK_I"/>
    <property type="match status" value="1"/>
</dbReference>
<accession>Q8U8B8</accession>
<evidence type="ECO:0000255" key="1">
    <source>
        <dbReference type="HAMAP-Rule" id="MF_00093"/>
    </source>
</evidence>
<evidence type="ECO:0000256" key="2">
    <source>
        <dbReference type="SAM" id="MobiDB-lite"/>
    </source>
</evidence>
<gene>
    <name evidence="1" type="primary">prfA</name>
    <name type="ordered locus">Atu4174</name>
    <name type="ORF">AGR_L_1353</name>
</gene>